<feature type="chain" id="PRO_1000050323" description="Phosphoribosylformylglycinamidine synthase subunit PurL">
    <location>
        <begin position="1"/>
        <end position="765"/>
    </location>
</feature>
<feature type="region of interest" description="Disordered" evidence="2">
    <location>
        <begin position="1"/>
        <end position="32"/>
    </location>
</feature>
<feature type="compositionally biased region" description="Polar residues" evidence="2">
    <location>
        <begin position="1"/>
        <end position="13"/>
    </location>
</feature>
<feature type="active site" evidence="1">
    <location>
        <position position="65"/>
    </location>
</feature>
<feature type="active site" description="Proton acceptor" evidence="1">
    <location>
        <position position="116"/>
    </location>
</feature>
<feature type="binding site" evidence="1">
    <location>
        <position position="68"/>
    </location>
    <ligand>
        <name>ATP</name>
        <dbReference type="ChEBI" id="CHEBI:30616"/>
    </ligand>
</feature>
<feature type="binding site" evidence="1">
    <location>
        <position position="112"/>
    </location>
    <ligand>
        <name>ATP</name>
        <dbReference type="ChEBI" id="CHEBI:30616"/>
    </ligand>
</feature>
<feature type="binding site" evidence="1">
    <location>
        <position position="114"/>
    </location>
    <ligand>
        <name>Mg(2+)</name>
        <dbReference type="ChEBI" id="CHEBI:18420"/>
        <label>1</label>
    </ligand>
</feature>
<feature type="binding site" evidence="1">
    <location>
        <begin position="115"/>
        <end position="118"/>
    </location>
    <ligand>
        <name>substrate</name>
    </ligand>
</feature>
<feature type="binding site" evidence="1">
    <location>
        <position position="137"/>
    </location>
    <ligand>
        <name>substrate</name>
    </ligand>
</feature>
<feature type="binding site" evidence="1">
    <location>
        <position position="138"/>
    </location>
    <ligand>
        <name>Mg(2+)</name>
        <dbReference type="ChEBI" id="CHEBI:18420"/>
        <label>2</label>
    </ligand>
</feature>
<feature type="binding site" evidence="1">
    <location>
        <position position="263"/>
    </location>
    <ligand>
        <name>substrate</name>
    </ligand>
</feature>
<feature type="binding site" evidence="1">
    <location>
        <position position="291"/>
    </location>
    <ligand>
        <name>Mg(2+)</name>
        <dbReference type="ChEBI" id="CHEBI:18420"/>
        <label>2</label>
    </ligand>
</feature>
<feature type="binding site" evidence="1">
    <location>
        <begin position="335"/>
        <end position="337"/>
    </location>
    <ligand>
        <name>substrate</name>
    </ligand>
</feature>
<feature type="binding site" evidence="1">
    <location>
        <position position="523"/>
    </location>
    <ligand>
        <name>ATP</name>
        <dbReference type="ChEBI" id="CHEBI:30616"/>
    </ligand>
</feature>
<feature type="binding site" evidence="1">
    <location>
        <position position="560"/>
    </location>
    <ligand>
        <name>ATP</name>
        <dbReference type="ChEBI" id="CHEBI:30616"/>
    </ligand>
</feature>
<feature type="binding site" evidence="1">
    <location>
        <position position="561"/>
    </location>
    <ligand>
        <name>Mg(2+)</name>
        <dbReference type="ChEBI" id="CHEBI:18420"/>
        <label>1</label>
    </ligand>
</feature>
<feature type="binding site" evidence="1">
    <location>
        <position position="563"/>
    </location>
    <ligand>
        <name>substrate</name>
    </ligand>
</feature>
<evidence type="ECO:0000255" key="1">
    <source>
        <dbReference type="HAMAP-Rule" id="MF_00420"/>
    </source>
</evidence>
<evidence type="ECO:0000256" key="2">
    <source>
        <dbReference type="SAM" id="MobiDB-lite"/>
    </source>
</evidence>
<protein>
    <recommendedName>
        <fullName evidence="1">Phosphoribosylformylglycinamidine synthase subunit PurL</fullName>
        <shortName evidence="1">FGAM synthase</shortName>
        <ecNumber evidence="1">6.3.5.3</ecNumber>
    </recommendedName>
    <alternativeName>
        <fullName evidence="1">Formylglycinamide ribonucleotide amidotransferase subunit II</fullName>
        <shortName evidence="1">FGAR amidotransferase II</shortName>
        <shortName evidence="1">FGAR-AT II</shortName>
    </alternativeName>
    <alternativeName>
        <fullName evidence="1">Glutamine amidotransferase PurL</fullName>
    </alternativeName>
    <alternativeName>
        <fullName evidence="1">Phosphoribosylformylglycinamidine synthase subunit II</fullName>
    </alternativeName>
</protein>
<reference key="1">
    <citation type="submission" date="2006-10" db="EMBL/GenBank/DDBJ databases">
        <authorList>
            <person name="Fleischmann R.D."/>
            <person name="Dodson R.J."/>
            <person name="Haft D.H."/>
            <person name="Merkel J.S."/>
            <person name="Nelson W.C."/>
            <person name="Fraser C.M."/>
        </authorList>
    </citation>
    <scope>NUCLEOTIDE SEQUENCE [LARGE SCALE GENOMIC DNA]</scope>
    <source>
        <strain>104</strain>
    </source>
</reference>
<proteinExistence type="inferred from homology"/>
<comment type="function">
    <text evidence="1">Part of the phosphoribosylformylglycinamidine synthase complex involved in the purines biosynthetic pathway. Catalyzes the ATP-dependent conversion of formylglycinamide ribonucleotide (FGAR) and glutamine to yield formylglycinamidine ribonucleotide (FGAM) and glutamate. The FGAM synthase complex is composed of three subunits. PurQ produces an ammonia molecule by converting glutamine to glutamate. PurL transfers the ammonia molecule to FGAR to form FGAM in an ATP-dependent manner. PurS interacts with PurQ and PurL and is thought to assist in the transfer of the ammonia molecule from PurQ to PurL.</text>
</comment>
<comment type="catalytic activity">
    <reaction evidence="1">
        <text>N(2)-formyl-N(1)-(5-phospho-beta-D-ribosyl)glycinamide + L-glutamine + ATP + H2O = 2-formamido-N(1)-(5-O-phospho-beta-D-ribosyl)acetamidine + L-glutamate + ADP + phosphate + H(+)</text>
        <dbReference type="Rhea" id="RHEA:17129"/>
        <dbReference type="ChEBI" id="CHEBI:15377"/>
        <dbReference type="ChEBI" id="CHEBI:15378"/>
        <dbReference type="ChEBI" id="CHEBI:29985"/>
        <dbReference type="ChEBI" id="CHEBI:30616"/>
        <dbReference type="ChEBI" id="CHEBI:43474"/>
        <dbReference type="ChEBI" id="CHEBI:58359"/>
        <dbReference type="ChEBI" id="CHEBI:147286"/>
        <dbReference type="ChEBI" id="CHEBI:147287"/>
        <dbReference type="ChEBI" id="CHEBI:456216"/>
        <dbReference type="EC" id="6.3.5.3"/>
    </reaction>
</comment>
<comment type="pathway">
    <text evidence="1">Purine metabolism; IMP biosynthesis via de novo pathway; 5-amino-1-(5-phospho-D-ribosyl)imidazole from N(2)-formyl-N(1)-(5-phospho-D-ribosyl)glycinamide: step 1/2.</text>
</comment>
<comment type="subunit">
    <text evidence="1">Monomer. Part of the FGAM synthase complex composed of 1 PurL, 1 PurQ and 2 PurS subunits.</text>
</comment>
<comment type="subcellular location">
    <subcellularLocation>
        <location evidence="1">Cytoplasm</location>
    </subcellularLocation>
</comment>
<comment type="similarity">
    <text evidence="1">Belongs to the FGAMS family.</text>
</comment>
<gene>
    <name evidence="1" type="primary">purL</name>
    <name type="ordered locus">MAV_0744</name>
</gene>
<organism>
    <name type="scientific">Mycobacterium avium (strain 104)</name>
    <dbReference type="NCBI Taxonomy" id="243243"/>
    <lineage>
        <taxon>Bacteria</taxon>
        <taxon>Bacillati</taxon>
        <taxon>Actinomycetota</taxon>
        <taxon>Actinomycetes</taxon>
        <taxon>Mycobacteriales</taxon>
        <taxon>Mycobacteriaceae</taxon>
        <taxon>Mycobacterium</taxon>
        <taxon>Mycobacterium avium complex (MAC)</taxon>
    </lineage>
</organism>
<name>PURL_MYCA1</name>
<dbReference type="EC" id="6.3.5.3" evidence="1"/>
<dbReference type="EMBL" id="CP000479">
    <property type="protein sequence ID" value="ABK68465.1"/>
    <property type="molecule type" value="Genomic_DNA"/>
</dbReference>
<dbReference type="RefSeq" id="WP_011723730.1">
    <property type="nucleotide sequence ID" value="NC_008595.1"/>
</dbReference>
<dbReference type="SMR" id="A0QAT1"/>
<dbReference type="KEGG" id="mav:MAV_0744"/>
<dbReference type="HOGENOM" id="CLU_003100_0_1_11"/>
<dbReference type="UniPathway" id="UPA00074">
    <property type="reaction ID" value="UER00128"/>
</dbReference>
<dbReference type="Proteomes" id="UP000001574">
    <property type="component" value="Chromosome"/>
</dbReference>
<dbReference type="GO" id="GO:0005737">
    <property type="term" value="C:cytoplasm"/>
    <property type="evidence" value="ECO:0007669"/>
    <property type="project" value="UniProtKB-SubCell"/>
</dbReference>
<dbReference type="GO" id="GO:0005524">
    <property type="term" value="F:ATP binding"/>
    <property type="evidence" value="ECO:0007669"/>
    <property type="project" value="UniProtKB-UniRule"/>
</dbReference>
<dbReference type="GO" id="GO:0000287">
    <property type="term" value="F:magnesium ion binding"/>
    <property type="evidence" value="ECO:0007669"/>
    <property type="project" value="UniProtKB-UniRule"/>
</dbReference>
<dbReference type="GO" id="GO:0004642">
    <property type="term" value="F:phosphoribosylformylglycinamidine synthase activity"/>
    <property type="evidence" value="ECO:0007669"/>
    <property type="project" value="UniProtKB-UniRule"/>
</dbReference>
<dbReference type="GO" id="GO:0006189">
    <property type="term" value="P:'de novo' IMP biosynthetic process"/>
    <property type="evidence" value="ECO:0007669"/>
    <property type="project" value="UniProtKB-UniRule"/>
</dbReference>
<dbReference type="CDD" id="cd02203">
    <property type="entry name" value="PurL_repeat1"/>
    <property type="match status" value="1"/>
</dbReference>
<dbReference type="CDD" id="cd02204">
    <property type="entry name" value="PurL_repeat2"/>
    <property type="match status" value="1"/>
</dbReference>
<dbReference type="FunFam" id="3.30.1330.10:FF:000004">
    <property type="entry name" value="Phosphoribosylformylglycinamidine synthase subunit PurL"/>
    <property type="match status" value="1"/>
</dbReference>
<dbReference type="FunFam" id="3.30.1330.10:FF:000021">
    <property type="entry name" value="Phosphoribosylformylglycinamidine synthase subunit PurL"/>
    <property type="match status" value="1"/>
</dbReference>
<dbReference type="FunFam" id="3.90.650.10:FF:000009">
    <property type="entry name" value="Phosphoribosylformylglycinamidine synthase subunit PurL"/>
    <property type="match status" value="1"/>
</dbReference>
<dbReference type="Gene3D" id="3.90.650.10">
    <property type="entry name" value="PurM-like C-terminal domain"/>
    <property type="match status" value="2"/>
</dbReference>
<dbReference type="Gene3D" id="3.30.1330.10">
    <property type="entry name" value="PurM-like, N-terminal domain"/>
    <property type="match status" value="2"/>
</dbReference>
<dbReference type="HAMAP" id="MF_00420">
    <property type="entry name" value="PurL_2"/>
    <property type="match status" value="1"/>
</dbReference>
<dbReference type="InterPro" id="IPR010074">
    <property type="entry name" value="PRibForGlyAmidine_synth_PurL"/>
</dbReference>
<dbReference type="InterPro" id="IPR041609">
    <property type="entry name" value="PurL_linker"/>
</dbReference>
<dbReference type="InterPro" id="IPR010918">
    <property type="entry name" value="PurM-like_C_dom"/>
</dbReference>
<dbReference type="InterPro" id="IPR036676">
    <property type="entry name" value="PurM-like_C_sf"/>
</dbReference>
<dbReference type="InterPro" id="IPR016188">
    <property type="entry name" value="PurM-like_N"/>
</dbReference>
<dbReference type="InterPro" id="IPR036921">
    <property type="entry name" value="PurM-like_N_sf"/>
</dbReference>
<dbReference type="NCBIfam" id="TIGR01736">
    <property type="entry name" value="FGAM_synth_II"/>
    <property type="match status" value="1"/>
</dbReference>
<dbReference type="NCBIfam" id="NF002290">
    <property type="entry name" value="PRK01213.1"/>
    <property type="match status" value="1"/>
</dbReference>
<dbReference type="PANTHER" id="PTHR43555">
    <property type="entry name" value="PHOSPHORIBOSYLFORMYLGLYCINAMIDINE SYNTHASE SUBUNIT PURL"/>
    <property type="match status" value="1"/>
</dbReference>
<dbReference type="PANTHER" id="PTHR43555:SF1">
    <property type="entry name" value="PHOSPHORIBOSYLFORMYLGLYCINAMIDINE SYNTHASE SUBUNIT PURL"/>
    <property type="match status" value="1"/>
</dbReference>
<dbReference type="Pfam" id="PF00586">
    <property type="entry name" value="AIRS"/>
    <property type="match status" value="2"/>
</dbReference>
<dbReference type="Pfam" id="PF02769">
    <property type="entry name" value="AIRS_C"/>
    <property type="match status" value="2"/>
</dbReference>
<dbReference type="Pfam" id="PF18072">
    <property type="entry name" value="FGAR-AT_linker"/>
    <property type="match status" value="1"/>
</dbReference>
<dbReference type="PIRSF" id="PIRSF001587">
    <property type="entry name" value="FGAM_synthase_II"/>
    <property type="match status" value="1"/>
</dbReference>
<dbReference type="SUPFAM" id="SSF56042">
    <property type="entry name" value="PurM C-terminal domain-like"/>
    <property type="match status" value="2"/>
</dbReference>
<dbReference type="SUPFAM" id="SSF55326">
    <property type="entry name" value="PurM N-terminal domain-like"/>
    <property type="match status" value="2"/>
</dbReference>
<sequence length="765" mass="80662">MTVSPTSAPTQAIDTVERAATTPDEPQPFGELGLKDDEYQRIREILGRRPTDTELAMYSVMWSEHCSYKSSKVHLRYFGETTTDEMRAGMLAGIGENAGVVDIGDGWAVTFKVESHNHPSYVEPYQGAATGVGGIVRDIMAMGARPVAVMDQLRFGAADAPDTRRVLDGVVRGIGGYGNSLGLPNIGGETVFDACYAGNPLVNAMCVGVLRQEDLHLAFASGAGNKIILFGARTGLDGIGGVSVLASDTFDAENSRKKLPSVQVGDPFMEKVLIECCLELYAGGLVIGIQDLGGAGLACATSELASAGDGGMEVRLEAVPLRTAGMTPAEVLCSESQERMCAVVTPENVDAFLAVCRKWDVLATVIGEVTDGDRLRITWHGQTVVDVPPRTVAHEGPVYQRPLARPDTQDALNADSSARLPRPATGAELRATLLALLGSPHLCSRAFITEQYDRYVRGNTVLAEHADGGVLRVDETTGRGIAVSTDASGRYTMLDPYAGAQLALAEAYRNVAVTGATPVAVTNCLNFGSPEDPAVMWQFAQAVRGLADGCVALGIPVTGGNVSFYNQTGSAAILPTPVVGVLGVLDDVSRRLPTALGAEPGETLMLLGETRDEFDGSVWAQVTADHLGGLPPKVDLAREKLLAEVLRAASRDGLVSAAHDLSEGGLAQAVVEAALAGETGCRIVLPEDADPFVTLFSESAGRVLVAVPRTEESRFRSMCEARGLPAVRIGVVDQASDEVEVQGLFTVSLAELRQTSESVLPRLFG</sequence>
<keyword id="KW-0067">ATP-binding</keyword>
<keyword id="KW-0963">Cytoplasm</keyword>
<keyword id="KW-0436">Ligase</keyword>
<keyword id="KW-0460">Magnesium</keyword>
<keyword id="KW-0479">Metal-binding</keyword>
<keyword id="KW-0547">Nucleotide-binding</keyword>
<keyword id="KW-0658">Purine biosynthesis</keyword>
<accession>A0QAT1</accession>